<keyword id="KW-0067">ATP-binding</keyword>
<keyword id="KW-0436">Ligase</keyword>
<keyword id="KW-0479">Metal-binding</keyword>
<keyword id="KW-0547">Nucleotide-binding</keyword>
<keyword id="KW-0671">Queuosine biosynthesis</keyword>
<keyword id="KW-1185">Reference proteome</keyword>
<keyword id="KW-0862">Zinc</keyword>
<reference key="1">
    <citation type="submission" date="2006-12" db="EMBL/GenBank/DDBJ databases">
        <title>Complete sequence of Chlorobium phaeobacteroides DSM 266.</title>
        <authorList>
            <consortium name="US DOE Joint Genome Institute"/>
            <person name="Copeland A."/>
            <person name="Lucas S."/>
            <person name="Lapidus A."/>
            <person name="Barry K."/>
            <person name="Detter J.C."/>
            <person name="Glavina del Rio T."/>
            <person name="Hammon N."/>
            <person name="Israni S."/>
            <person name="Pitluck S."/>
            <person name="Goltsman E."/>
            <person name="Schmutz J."/>
            <person name="Larimer F."/>
            <person name="Land M."/>
            <person name="Hauser L."/>
            <person name="Mikhailova N."/>
            <person name="Li T."/>
            <person name="Overmann J."/>
            <person name="Bryant D.A."/>
            <person name="Richardson P."/>
        </authorList>
    </citation>
    <scope>NUCLEOTIDE SEQUENCE [LARGE SCALE GENOMIC DNA]</scope>
    <source>
        <strain>DSM 266 / SMG 266 / 2430</strain>
    </source>
</reference>
<sequence>MKAVVLLSGGMDSLVTTAIANAQGFELAAMHVNYGQRTWHKELEAFRLIADHYAIGERLEINADYLAQIGGSSLTDYSMPISGADLQGLSIPTSYVPFRNAGFLSMAVSWAEVIGAERIFIGAVEEDSSGYPDCRKVFYDAFNAVIALGTKPETSIAIMTPLIEMQKSEIVRKGMELTAPFELSWSCYKSEGKACGVCDSCALRLRAFERAGMRDPIDYEQRPDYI</sequence>
<evidence type="ECO:0000255" key="1">
    <source>
        <dbReference type="HAMAP-Rule" id="MF_01633"/>
    </source>
</evidence>
<dbReference type="EC" id="6.3.4.20" evidence="1"/>
<dbReference type="EMBL" id="CP000492">
    <property type="protein sequence ID" value="ABL65951.1"/>
    <property type="molecule type" value="Genomic_DNA"/>
</dbReference>
<dbReference type="RefSeq" id="WP_011745757.1">
    <property type="nucleotide sequence ID" value="NC_008639.1"/>
</dbReference>
<dbReference type="SMR" id="A1BHS4"/>
<dbReference type="STRING" id="290317.Cpha266_1935"/>
<dbReference type="KEGG" id="cph:Cpha266_1935"/>
<dbReference type="eggNOG" id="COG0603">
    <property type="taxonomic scope" value="Bacteria"/>
</dbReference>
<dbReference type="HOGENOM" id="CLU_081854_1_0_10"/>
<dbReference type="OrthoDB" id="9789567at2"/>
<dbReference type="UniPathway" id="UPA00391"/>
<dbReference type="Proteomes" id="UP000008701">
    <property type="component" value="Chromosome"/>
</dbReference>
<dbReference type="GO" id="GO:0005524">
    <property type="term" value="F:ATP binding"/>
    <property type="evidence" value="ECO:0007669"/>
    <property type="project" value="UniProtKB-UniRule"/>
</dbReference>
<dbReference type="GO" id="GO:0016879">
    <property type="term" value="F:ligase activity, forming carbon-nitrogen bonds"/>
    <property type="evidence" value="ECO:0007669"/>
    <property type="project" value="UniProtKB-UniRule"/>
</dbReference>
<dbReference type="GO" id="GO:0008270">
    <property type="term" value="F:zinc ion binding"/>
    <property type="evidence" value="ECO:0007669"/>
    <property type="project" value="UniProtKB-UniRule"/>
</dbReference>
<dbReference type="GO" id="GO:0008616">
    <property type="term" value="P:queuosine biosynthetic process"/>
    <property type="evidence" value="ECO:0007669"/>
    <property type="project" value="UniProtKB-UniRule"/>
</dbReference>
<dbReference type="CDD" id="cd01995">
    <property type="entry name" value="QueC-like"/>
    <property type="match status" value="1"/>
</dbReference>
<dbReference type="Gene3D" id="3.40.50.620">
    <property type="entry name" value="HUPs"/>
    <property type="match status" value="1"/>
</dbReference>
<dbReference type="HAMAP" id="MF_01633">
    <property type="entry name" value="QueC"/>
    <property type="match status" value="1"/>
</dbReference>
<dbReference type="InterPro" id="IPR018317">
    <property type="entry name" value="QueC"/>
</dbReference>
<dbReference type="InterPro" id="IPR014729">
    <property type="entry name" value="Rossmann-like_a/b/a_fold"/>
</dbReference>
<dbReference type="NCBIfam" id="TIGR00364">
    <property type="entry name" value="7-cyano-7-deazaguanine synthase QueC"/>
    <property type="match status" value="1"/>
</dbReference>
<dbReference type="PANTHER" id="PTHR42914">
    <property type="entry name" value="7-CYANO-7-DEAZAGUANINE SYNTHASE"/>
    <property type="match status" value="1"/>
</dbReference>
<dbReference type="PANTHER" id="PTHR42914:SF1">
    <property type="entry name" value="7-CYANO-7-DEAZAGUANINE SYNTHASE"/>
    <property type="match status" value="1"/>
</dbReference>
<dbReference type="Pfam" id="PF06508">
    <property type="entry name" value="QueC"/>
    <property type="match status" value="1"/>
</dbReference>
<dbReference type="PIRSF" id="PIRSF006293">
    <property type="entry name" value="ExsB"/>
    <property type="match status" value="1"/>
</dbReference>
<dbReference type="SUPFAM" id="SSF52402">
    <property type="entry name" value="Adenine nucleotide alpha hydrolases-like"/>
    <property type="match status" value="1"/>
</dbReference>
<organism>
    <name type="scientific">Chlorobium phaeobacteroides (strain DSM 266 / SMG 266 / 2430)</name>
    <dbReference type="NCBI Taxonomy" id="290317"/>
    <lineage>
        <taxon>Bacteria</taxon>
        <taxon>Pseudomonadati</taxon>
        <taxon>Chlorobiota</taxon>
        <taxon>Chlorobiia</taxon>
        <taxon>Chlorobiales</taxon>
        <taxon>Chlorobiaceae</taxon>
        <taxon>Chlorobium/Pelodictyon group</taxon>
        <taxon>Chlorobium</taxon>
    </lineage>
</organism>
<feature type="chain" id="PRO_1000069763" description="7-cyano-7-deazaguanine synthase">
    <location>
        <begin position="1"/>
        <end position="226"/>
    </location>
</feature>
<feature type="binding site" evidence="1">
    <location>
        <begin position="7"/>
        <end position="17"/>
    </location>
    <ligand>
        <name>ATP</name>
        <dbReference type="ChEBI" id="CHEBI:30616"/>
    </ligand>
</feature>
<feature type="binding site" evidence="1">
    <location>
        <position position="187"/>
    </location>
    <ligand>
        <name>Zn(2+)</name>
        <dbReference type="ChEBI" id="CHEBI:29105"/>
    </ligand>
</feature>
<feature type="binding site" evidence="1">
    <location>
        <position position="195"/>
    </location>
    <ligand>
        <name>Zn(2+)</name>
        <dbReference type="ChEBI" id="CHEBI:29105"/>
    </ligand>
</feature>
<feature type="binding site" evidence="1">
    <location>
        <position position="198"/>
    </location>
    <ligand>
        <name>Zn(2+)</name>
        <dbReference type="ChEBI" id="CHEBI:29105"/>
    </ligand>
</feature>
<feature type="binding site" evidence="1">
    <location>
        <position position="201"/>
    </location>
    <ligand>
        <name>Zn(2+)</name>
        <dbReference type="ChEBI" id="CHEBI:29105"/>
    </ligand>
</feature>
<name>QUEC_CHLPD</name>
<gene>
    <name evidence="1" type="primary">queC</name>
    <name type="ordered locus">Cpha266_1935</name>
</gene>
<accession>A1BHS4</accession>
<proteinExistence type="inferred from homology"/>
<protein>
    <recommendedName>
        <fullName evidence="1">7-cyano-7-deazaguanine synthase</fullName>
        <ecNumber evidence="1">6.3.4.20</ecNumber>
    </recommendedName>
    <alternativeName>
        <fullName evidence="1">7-cyano-7-carbaguanine synthase</fullName>
    </alternativeName>
    <alternativeName>
        <fullName evidence="1">PreQ(0) synthase</fullName>
    </alternativeName>
    <alternativeName>
        <fullName evidence="1">Queuosine biosynthesis protein QueC</fullName>
    </alternativeName>
</protein>
<comment type="function">
    <text evidence="1">Catalyzes the ATP-dependent conversion of 7-carboxy-7-deazaguanine (CDG) to 7-cyano-7-deazaguanine (preQ(0)).</text>
</comment>
<comment type="catalytic activity">
    <reaction evidence="1">
        <text>7-carboxy-7-deazaguanine + NH4(+) + ATP = 7-cyano-7-deazaguanine + ADP + phosphate + H2O + H(+)</text>
        <dbReference type="Rhea" id="RHEA:27982"/>
        <dbReference type="ChEBI" id="CHEBI:15377"/>
        <dbReference type="ChEBI" id="CHEBI:15378"/>
        <dbReference type="ChEBI" id="CHEBI:28938"/>
        <dbReference type="ChEBI" id="CHEBI:30616"/>
        <dbReference type="ChEBI" id="CHEBI:43474"/>
        <dbReference type="ChEBI" id="CHEBI:45075"/>
        <dbReference type="ChEBI" id="CHEBI:61036"/>
        <dbReference type="ChEBI" id="CHEBI:456216"/>
        <dbReference type="EC" id="6.3.4.20"/>
    </reaction>
</comment>
<comment type="cofactor">
    <cofactor evidence="1">
        <name>Zn(2+)</name>
        <dbReference type="ChEBI" id="CHEBI:29105"/>
    </cofactor>
    <text evidence="1">Binds 1 zinc ion per subunit.</text>
</comment>
<comment type="pathway">
    <text evidence="1">Purine metabolism; 7-cyano-7-deazaguanine biosynthesis.</text>
</comment>
<comment type="similarity">
    <text evidence="1">Belongs to the QueC family.</text>
</comment>